<dbReference type="EC" id="3.1.26.5" evidence="1"/>
<dbReference type="EMBL" id="CP001175">
    <property type="protein sequence ID" value="ACK41001.1"/>
    <property type="molecule type" value="Genomic_DNA"/>
</dbReference>
<dbReference type="RefSeq" id="WP_003735059.1">
    <property type="nucleotide sequence ID" value="NC_011660.1"/>
</dbReference>
<dbReference type="SMR" id="B8DCV5"/>
<dbReference type="KEGG" id="lmh:LMHCC_2666"/>
<dbReference type="HOGENOM" id="CLU_117179_9_1_9"/>
<dbReference type="GO" id="GO:0030677">
    <property type="term" value="C:ribonuclease P complex"/>
    <property type="evidence" value="ECO:0007669"/>
    <property type="project" value="TreeGrafter"/>
</dbReference>
<dbReference type="GO" id="GO:0042781">
    <property type="term" value="F:3'-tRNA processing endoribonuclease activity"/>
    <property type="evidence" value="ECO:0007669"/>
    <property type="project" value="TreeGrafter"/>
</dbReference>
<dbReference type="GO" id="GO:0004526">
    <property type="term" value="F:ribonuclease P activity"/>
    <property type="evidence" value="ECO:0007669"/>
    <property type="project" value="UniProtKB-UniRule"/>
</dbReference>
<dbReference type="GO" id="GO:0000049">
    <property type="term" value="F:tRNA binding"/>
    <property type="evidence" value="ECO:0007669"/>
    <property type="project" value="UniProtKB-UniRule"/>
</dbReference>
<dbReference type="GO" id="GO:0001682">
    <property type="term" value="P:tRNA 5'-leader removal"/>
    <property type="evidence" value="ECO:0007669"/>
    <property type="project" value="UniProtKB-UniRule"/>
</dbReference>
<dbReference type="FunFam" id="3.30.230.10:FF:000021">
    <property type="entry name" value="Ribonuclease P protein component"/>
    <property type="match status" value="1"/>
</dbReference>
<dbReference type="Gene3D" id="3.30.230.10">
    <property type="match status" value="1"/>
</dbReference>
<dbReference type="HAMAP" id="MF_00227">
    <property type="entry name" value="RNase_P"/>
    <property type="match status" value="1"/>
</dbReference>
<dbReference type="InterPro" id="IPR020568">
    <property type="entry name" value="Ribosomal_Su5_D2-typ_SF"/>
</dbReference>
<dbReference type="InterPro" id="IPR014721">
    <property type="entry name" value="Ribsml_uS5_D2-typ_fold_subgr"/>
</dbReference>
<dbReference type="InterPro" id="IPR000100">
    <property type="entry name" value="RNase_P"/>
</dbReference>
<dbReference type="InterPro" id="IPR020539">
    <property type="entry name" value="RNase_P_CS"/>
</dbReference>
<dbReference type="NCBIfam" id="TIGR00188">
    <property type="entry name" value="rnpA"/>
    <property type="match status" value="1"/>
</dbReference>
<dbReference type="PANTHER" id="PTHR33992">
    <property type="entry name" value="RIBONUCLEASE P PROTEIN COMPONENT"/>
    <property type="match status" value="1"/>
</dbReference>
<dbReference type="PANTHER" id="PTHR33992:SF1">
    <property type="entry name" value="RIBONUCLEASE P PROTEIN COMPONENT"/>
    <property type="match status" value="1"/>
</dbReference>
<dbReference type="Pfam" id="PF00825">
    <property type="entry name" value="Ribonuclease_P"/>
    <property type="match status" value="1"/>
</dbReference>
<dbReference type="SUPFAM" id="SSF54211">
    <property type="entry name" value="Ribosomal protein S5 domain 2-like"/>
    <property type="match status" value="1"/>
</dbReference>
<dbReference type="PROSITE" id="PS00648">
    <property type="entry name" value="RIBONUCLEASE_P"/>
    <property type="match status" value="1"/>
</dbReference>
<evidence type="ECO:0000255" key="1">
    <source>
        <dbReference type="HAMAP-Rule" id="MF_00227"/>
    </source>
</evidence>
<sequence length="119" mass="14090">MKKKYRIKKNDDFQKVFRRGKSFANRQFVVYTLKQEGSTHFRIGLSVSKKIGNAVCRNRIKRYIRQSFHELESQINPENEYIIIARKPAANMDFHEVKKSLIHVLKVGRVLKQKPNNSK</sequence>
<reference key="1">
    <citation type="journal article" date="2011" name="J. Bacteriol.">
        <title>Genome sequence of lineage III Listeria monocytogenes strain HCC23.</title>
        <authorList>
            <person name="Steele C.L."/>
            <person name="Donaldson J.R."/>
            <person name="Paul D."/>
            <person name="Banes M.M."/>
            <person name="Arick T."/>
            <person name="Bridges S.M."/>
            <person name="Lawrence M.L."/>
        </authorList>
    </citation>
    <scope>NUCLEOTIDE SEQUENCE [LARGE SCALE GENOMIC DNA]</scope>
    <source>
        <strain>HCC23</strain>
    </source>
</reference>
<accession>B8DCV5</accession>
<proteinExistence type="inferred from homology"/>
<name>RNPA_LISMH</name>
<keyword id="KW-0255">Endonuclease</keyword>
<keyword id="KW-0378">Hydrolase</keyword>
<keyword id="KW-0540">Nuclease</keyword>
<keyword id="KW-0694">RNA-binding</keyword>
<keyword id="KW-0819">tRNA processing</keyword>
<feature type="chain" id="PRO_1000194647" description="Ribonuclease P protein component">
    <location>
        <begin position="1"/>
        <end position="119"/>
    </location>
</feature>
<comment type="function">
    <text evidence="1">RNaseP catalyzes the removal of the 5'-leader sequence from pre-tRNA to produce the mature 5'-terminus. It can also cleave other RNA substrates such as 4.5S RNA. The protein component plays an auxiliary but essential role in vivo by binding to the 5'-leader sequence and broadening the substrate specificity of the ribozyme.</text>
</comment>
<comment type="catalytic activity">
    <reaction evidence="1">
        <text>Endonucleolytic cleavage of RNA, removing 5'-extranucleotides from tRNA precursor.</text>
        <dbReference type="EC" id="3.1.26.5"/>
    </reaction>
</comment>
<comment type="subunit">
    <text evidence="1">Consists of a catalytic RNA component (M1 or rnpB) and a protein subunit.</text>
</comment>
<comment type="similarity">
    <text evidence="1">Belongs to the RnpA family.</text>
</comment>
<gene>
    <name evidence="1" type="primary">rnpA</name>
    <name type="ordered locus">LMHCC_2666</name>
</gene>
<protein>
    <recommendedName>
        <fullName evidence="1">Ribonuclease P protein component</fullName>
        <shortName evidence="1">RNase P protein</shortName>
        <shortName evidence="1">RNaseP protein</shortName>
        <ecNumber evidence="1">3.1.26.5</ecNumber>
    </recommendedName>
    <alternativeName>
        <fullName evidence="1">Protein C5</fullName>
    </alternativeName>
</protein>
<organism>
    <name type="scientific">Listeria monocytogenes serotype 4a (strain HCC23)</name>
    <dbReference type="NCBI Taxonomy" id="552536"/>
    <lineage>
        <taxon>Bacteria</taxon>
        <taxon>Bacillati</taxon>
        <taxon>Bacillota</taxon>
        <taxon>Bacilli</taxon>
        <taxon>Bacillales</taxon>
        <taxon>Listeriaceae</taxon>
        <taxon>Listeria</taxon>
    </lineage>
</organism>